<comment type="catalytic activity">
    <reaction evidence="1">
        <text>urea + 2 H2O + H(+) = hydrogencarbonate + 2 NH4(+)</text>
        <dbReference type="Rhea" id="RHEA:20557"/>
        <dbReference type="ChEBI" id="CHEBI:15377"/>
        <dbReference type="ChEBI" id="CHEBI:15378"/>
        <dbReference type="ChEBI" id="CHEBI:16199"/>
        <dbReference type="ChEBI" id="CHEBI:17544"/>
        <dbReference type="ChEBI" id="CHEBI:28938"/>
        <dbReference type="EC" id="3.5.1.5"/>
    </reaction>
</comment>
<comment type="cofactor">
    <cofactor evidence="1">
        <name>Ni cation</name>
        <dbReference type="ChEBI" id="CHEBI:25516"/>
    </cofactor>
    <text evidence="1">Binds 2 nickel ions per subunit.</text>
</comment>
<comment type="pathway">
    <text evidence="1">Nitrogen metabolism; urea degradation; CO(2) and NH(3) from urea (urease route): step 1/1.</text>
</comment>
<comment type="subunit">
    <text evidence="1">Heterotrimer of UreA (gamma), UreB (beta) and UreC (alpha) subunits. Three heterotrimers associate to form the active enzyme.</text>
</comment>
<comment type="subcellular location">
    <subcellularLocation>
        <location evidence="1">Cytoplasm</location>
    </subcellularLocation>
</comment>
<comment type="PTM">
    <text evidence="1">Carboxylation allows a single lysine to coordinate two nickel ions.</text>
</comment>
<comment type="similarity">
    <text evidence="1">Belongs to the metallo-dependent hydrolases superfamily. Urease alpha subunit family.</text>
</comment>
<proteinExistence type="inferred from homology"/>
<keyword id="KW-0963">Cytoplasm</keyword>
<keyword id="KW-0378">Hydrolase</keyword>
<keyword id="KW-0479">Metal-binding</keyword>
<keyword id="KW-0533">Nickel</keyword>
<keyword id="KW-1185">Reference proteome</keyword>
<reference key="1">
    <citation type="journal article" date="2009" name="PLoS ONE">
        <title>Non mycobacterial virulence genes in the genome of the emerging pathogen Mycobacterium abscessus.</title>
        <authorList>
            <person name="Ripoll F."/>
            <person name="Pasek S."/>
            <person name="Schenowitz C."/>
            <person name="Dossat C."/>
            <person name="Barbe V."/>
            <person name="Rottman M."/>
            <person name="Macheras E."/>
            <person name="Heym B."/>
            <person name="Herrmann J.L."/>
            <person name="Daffe M."/>
            <person name="Brosch R."/>
            <person name="Risler J.L."/>
            <person name="Gaillard J.L."/>
        </authorList>
    </citation>
    <scope>NUCLEOTIDE SEQUENCE [LARGE SCALE GENOMIC DNA]</scope>
    <source>
        <strain>ATCC 19977 / DSM 44196 / CCUG 20993 / CIP 104536 / JCM 13569 / NCTC 13031 / TMC 1543 / L948</strain>
    </source>
</reference>
<feature type="chain" id="PRO_1000188883" description="Urease subunit alpha">
    <location>
        <begin position="1"/>
        <end position="577"/>
    </location>
</feature>
<feature type="domain" description="Urease" evidence="1">
    <location>
        <begin position="136"/>
        <end position="577"/>
    </location>
</feature>
<feature type="active site" description="Proton donor" evidence="1">
    <location>
        <position position="327"/>
    </location>
</feature>
<feature type="binding site" evidence="1">
    <location>
        <position position="141"/>
    </location>
    <ligand>
        <name>Ni(2+)</name>
        <dbReference type="ChEBI" id="CHEBI:49786"/>
        <label>1</label>
    </ligand>
</feature>
<feature type="binding site" evidence="1">
    <location>
        <position position="143"/>
    </location>
    <ligand>
        <name>Ni(2+)</name>
        <dbReference type="ChEBI" id="CHEBI:49786"/>
        <label>1</label>
    </ligand>
</feature>
<feature type="binding site" description="via carbamate group" evidence="1">
    <location>
        <position position="224"/>
    </location>
    <ligand>
        <name>Ni(2+)</name>
        <dbReference type="ChEBI" id="CHEBI:49786"/>
        <label>1</label>
    </ligand>
</feature>
<feature type="binding site" description="via carbamate group" evidence="1">
    <location>
        <position position="224"/>
    </location>
    <ligand>
        <name>Ni(2+)</name>
        <dbReference type="ChEBI" id="CHEBI:49786"/>
        <label>2</label>
    </ligand>
</feature>
<feature type="binding site" evidence="1">
    <location>
        <position position="226"/>
    </location>
    <ligand>
        <name>substrate</name>
    </ligand>
</feature>
<feature type="binding site" evidence="1">
    <location>
        <position position="253"/>
    </location>
    <ligand>
        <name>Ni(2+)</name>
        <dbReference type="ChEBI" id="CHEBI:49786"/>
        <label>2</label>
    </ligand>
</feature>
<feature type="binding site" evidence="1">
    <location>
        <position position="279"/>
    </location>
    <ligand>
        <name>Ni(2+)</name>
        <dbReference type="ChEBI" id="CHEBI:49786"/>
        <label>2</label>
    </ligand>
</feature>
<feature type="binding site" evidence="1">
    <location>
        <position position="367"/>
    </location>
    <ligand>
        <name>Ni(2+)</name>
        <dbReference type="ChEBI" id="CHEBI:49786"/>
        <label>1</label>
    </ligand>
</feature>
<feature type="modified residue" description="N6-carboxylysine" evidence="1">
    <location>
        <position position="224"/>
    </location>
</feature>
<gene>
    <name evidence="1" type="primary">ureC</name>
    <name type="ordered locus">MAB_2425</name>
</gene>
<organism>
    <name type="scientific">Mycobacteroides abscessus (strain ATCC 19977 / DSM 44196 / CCUG 20993 / CIP 104536 / JCM 13569 / NCTC 13031 / TMC 1543 / L948)</name>
    <name type="common">Mycobacterium abscessus</name>
    <dbReference type="NCBI Taxonomy" id="561007"/>
    <lineage>
        <taxon>Bacteria</taxon>
        <taxon>Bacillati</taxon>
        <taxon>Actinomycetota</taxon>
        <taxon>Actinomycetes</taxon>
        <taxon>Mycobacteriales</taxon>
        <taxon>Mycobacteriaceae</taxon>
        <taxon>Mycobacteroides</taxon>
        <taxon>Mycobacteroides abscessus</taxon>
    </lineage>
</organism>
<evidence type="ECO:0000255" key="1">
    <source>
        <dbReference type="HAMAP-Rule" id="MF_01953"/>
    </source>
</evidence>
<dbReference type="EC" id="3.5.1.5" evidence="1"/>
<dbReference type="EMBL" id="CU458896">
    <property type="protein sequence ID" value="CAM62506.1"/>
    <property type="molecule type" value="Genomic_DNA"/>
</dbReference>
<dbReference type="RefSeq" id="WP_005079396.1">
    <property type="nucleotide sequence ID" value="NZ_MLCG01000006.1"/>
</dbReference>
<dbReference type="SMR" id="B1MB85"/>
<dbReference type="MEROPS" id="M38.982"/>
<dbReference type="GeneID" id="93379364"/>
<dbReference type="KEGG" id="mab:MAB_2425"/>
<dbReference type="UniPathway" id="UPA00258">
    <property type="reaction ID" value="UER00370"/>
</dbReference>
<dbReference type="Proteomes" id="UP000007137">
    <property type="component" value="Chromosome"/>
</dbReference>
<dbReference type="GO" id="GO:0005737">
    <property type="term" value="C:cytoplasm"/>
    <property type="evidence" value="ECO:0007669"/>
    <property type="project" value="UniProtKB-SubCell"/>
</dbReference>
<dbReference type="GO" id="GO:0016151">
    <property type="term" value="F:nickel cation binding"/>
    <property type="evidence" value="ECO:0007669"/>
    <property type="project" value="UniProtKB-UniRule"/>
</dbReference>
<dbReference type="GO" id="GO:0009039">
    <property type="term" value="F:urease activity"/>
    <property type="evidence" value="ECO:0007669"/>
    <property type="project" value="UniProtKB-UniRule"/>
</dbReference>
<dbReference type="GO" id="GO:0043419">
    <property type="term" value="P:urea catabolic process"/>
    <property type="evidence" value="ECO:0007669"/>
    <property type="project" value="UniProtKB-UniRule"/>
</dbReference>
<dbReference type="CDD" id="cd00375">
    <property type="entry name" value="Urease_alpha"/>
    <property type="match status" value="1"/>
</dbReference>
<dbReference type="Gene3D" id="3.20.20.140">
    <property type="entry name" value="Metal-dependent hydrolases"/>
    <property type="match status" value="1"/>
</dbReference>
<dbReference type="Gene3D" id="2.30.40.10">
    <property type="entry name" value="Urease, subunit C, domain 1"/>
    <property type="match status" value="1"/>
</dbReference>
<dbReference type="HAMAP" id="MF_01953">
    <property type="entry name" value="Urease_alpha"/>
    <property type="match status" value="1"/>
</dbReference>
<dbReference type="InterPro" id="IPR006680">
    <property type="entry name" value="Amidohydro-rel"/>
</dbReference>
<dbReference type="InterPro" id="IPR011059">
    <property type="entry name" value="Metal-dep_hydrolase_composite"/>
</dbReference>
<dbReference type="InterPro" id="IPR032466">
    <property type="entry name" value="Metal_Hydrolase"/>
</dbReference>
<dbReference type="InterPro" id="IPR011612">
    <property type="entry name" value="Urease_alpha_N_dom"/>
</dbReference>
<dbReference type="InterPro" id="IPR050112">
    <property type="entry name" value="Urease_alpha_subunit"/>
</dbReference>
<dbReference type="InterPro" id="IPR017950">
    <property type="entry name" value="Urease_AS"/>
</dbReference>
<dbReference type="InterPro" id="IPR005848">
    <property type="entry name" value="Urease_asu"/>
</dbReference>
<dbReference type="InterPro" id="IPR017951">
    <property type="entry name" value="Urease_asu_c"/>
</dbReference>
<dbReference type="InterPro" id="IPR029754">
    <property type="entry name" value="Urease_Ni-bd"/>
</dbReference>
<dbReference type="NCBIfam" id="NF009685">
    <property type="entry name" value="PRK13206.1"/>
    <property type="match status" value="1"/>
</dbReference>
<dbReference type="NCBIfam" id="NF009686">
    <property type="entry name" value="PRK13207.1"/>
    <property type="match status" value="1"/>
</dbReference>
<dbReference type="NCBIfam" id="TIGR01792">
    <property type="entry name" value="urease_alph"/>
    <property type="match status" value="1"/>
</dbReference>
<dbReference type="PANTHER" id="PTHR43440">
    <property type="entry name" value="UREASE"/>
    <property type="match status" value="1"/>
</dbReference>
<dbReference type="PANTHER" id="PTHR43440:SF1">
    <property type="entry name" value="UREASE"/>
    <property type="match status" value="1"/>
</dbReference>
<dbReference type="Pfam" id="PF01979">
    <property type="entry name" value="Amidohydro_1"/>
    <property type="match status" value="1"/>
</dbReference>
<dbReference type="Pfam" id="PF00449">
    <property type="entry name" value="Urease_alpha"/>
    <property type="match status" value="1"/>
</dbReference>
<dbReference type="PRINTS" id="PR01752">
    <property type="entry name" value="UREASE"/>
</dbReference>
<dbReference type="SUPFAM" id="SSF51338">
    <property type="entry name" value="Composite domain of metallo-dependent hydrolases"/>
    <property type="match status" value="2"/>
</dbReference>
<dbReference type="SUPFAM" id="SSF51556">
    <property type="entry name" value="Metallo-dependent hydrolases"/>
    <property type="match status" value="1"/>
</dbReference>
<dbReference type="PROSITE" id="PS01120">
    <property type="entry name" value="UREASE_1"/>
    <property type="match status" value="1"/>
</dbReference>
<dbReference type="PROSITE" id="PS00145">
    <property type="entry name" value="UREASE_2"/>
    <property type="match status" value="1"/>
</dbReference>
<dbReference type="PROSITE" id="PS51368">
    <property type="entry name" value="UREASE_3"/>
    <property type="match status" value="1"/>
</dbReference>
<sequence>MTRLTREHYAKLYGPTTGDRIRLADTDLIIEITEDRCGGPGLAGEEAVFGGGKVLRESMGQSRLTRAGGAPDTVITGAIIIDHWGIIKADIGIRDGRIVGIGKAGNPDIMDGVDPALIVGPSTEIIAGNNRIVTAGGIDCHVHFICPQILPEALSGGITTMIGGGTGPAEGSKATTVTPGAWHLGRMLQALDGWPMNILMLGKGNTVNPDAMWEQLRGGAAGFKLHEDWGTTPAVIDACLRVADEADVQVALHSDTLNETGFVEGTLAAIGGRAIHAYHTEGAGGGHAPDIITVASHPNVMPSSTNPTRPHTVNTLDEHLDMLMVCHHLNAAVPEDLAFAESRIRPSTIAAEDLLHDIGAISMIGSDSQAMGRIGEVVMRTWQTAHVMKKRRGALPGDPSGPNGNDNNRVRRYVAKYTICPAITHGIDHEIGSVEVGKLADLVLWEPAFFGVRPHAVIKGGGIVWAAMGDANASIPTPQPVFPRPMFSAMHAVAAGLAVHFVSPTAIEDDLAARLALRRRLVPTRDVRNRGKADLPLNDAMPDIRVDPDTFTVRIDGEVWEEHPAAELPMAQRYFLF</sequence>
<protein>
    <recommendedName>
        <fullName evidence="1">Urease subunit alpha</fullName>
        <ecNumber evidence="1">3.5.1.5</ecNumber>
    </recommendedName>
    <alternativeName>
        <fullName evidence="1">Urea amidohydrolase subunit alpha</fullName>
    </alternativeName>
</protein>
<accession>B1MB85</accession>
<name>URE1_MYCA9</name>